<gene>
    <name type="primary">NDUFA3</name>
</gene>
<accession>O95167</accession>
<name>NDUA3_HUMAN</name>
<comment type="function">
    <text evidence="6">Accessory subunit of the mitochondrial membrane respiratory chain NADH dehydrogenase (Complex I), that is believed not to be involved in catalysis. Complex I functions in the transfer of electrons from NADH to the respiratory chain. The immediate electron acceptor for the enzyme is believed to be ubiquinone.</text>
</comment>
<comment type="subunit">
    <text evidence="4 6">Complex I is composed of 45 different subunits.</text>
</comment>
<comment type="interaction">
    <interactant intactId="EBI-1246131">
        <id>O95167</id>
    </interactant>
    <interactant intactId="EBI-17233035">
        <id>Q9BUF7-2</id>
        <label>CRB3</label>
    </interactant>
    <organismsDiffer>false</organismsDiffer>
    <experiments>3</experiments>
</comment>
<comment type="interaction">
    <interactant intactId="EBI-1246131">
        <id>O95167</id>
    </interactant>
    <interactant intactId="EBI-3915253">
        <id>Q15125</id>
        <label>EBP</label>
    </interactant>
    <organismsDiffer>false</organismsDiffer>
    <experiments>3</experiments>
</comment>
<comment type="interaction">
    <interactant intactId="EBI-1246131">
        <id>O95167</id>
    </interactant>
    <interactant intactId="EBI-711490">
        <id>Q9UKR5</id>
        <label>ERG28</label>
    </interactant>
    <organismsDiffer>false</organismsDiffer>
    <experiments>3</experiments>
</comment>
<comment type="interaction">
    <interactant intactId="EBI-1246131">
        <id>O95167</id>
    </interactant>
    <interactant intactId="EBI-17231387">
        <id>Q6ZVE7</id>
        <label>GOLT1A</label>
    </interactant>
    <organismsDiffer>false</organismsDiffer>
    <experiments>3</experiments>
</comment>
<comment type="interaction">
    <interactant intactId="EBI-1246131">
        <id>O95167</id>
    </interactant>
    <interactant intactId="EBI-750776">
        <id>O95214</id>
        <label>LEPROTL1</label>
    </interactant>
    <organismsDiffer>false</organismsDiffer>
    <experiments>3</experiments>
</comment>
<comment type="interaction">
    <interactant intactId="EBI-1246131">
        <id>O95167</id>
    </interactant>
    <interactant intactId="EBI-6163737">
        <id>Q8N4V1</id>
        <label>MMGT1</label>
    </interactant>
    <organismsDiffer>false</organismsDiffer>
    <experiments>4</experiments>
</comment>
<comment type="interaction">
    <interactant intactId="EBI-1246131">
        <id>O95167</id>
    </interactant>
    <interactant intactId="EBI-17263240">
        <id>P15941-11</id>
        <label>MUC1</label>
    </interactant>
    <organismsDiffer>false</organismsDiffer>
    <experiments>3</experiments>
</comment>
<comment type="interaction">
    <interactant intactId="EBI-1246131">
        <id>O95167</id>
    </interactant>
    <interactant intactId="EBI-13292283">
        <id>Q9UHI5</id>
        <label>SLC7A8</label>
    </interactant>
    <organismsDiffer>false</organismsDiffer>
    <experiments>3</experiments>
</comment>
<comment type="interaction">
    <interactant intactId="EBI-1246131">
        <id>O95167</id>
    </interactant>
    <interactant intactId="EBI-12947623">
        <id>Q96MV1</id>
        <label>TLCD4</label>
    </interactant>
    <organismsDiffer>false</organismsDiffer>
    <experiments>3</experiments>
</comment>
<comment type="interaction">
    <interactant intactId="EBI-1246131">
        <id>O95167</id>
    </interactant>
    <interactant intactId="EBI-6448756">
        <id>Q96DZ7</id>
        <label>TM4SF19</label>
    </interactant>
    <organismsDiffer>false</organismsDiffer>
    <experiments>3</experiments>
</comment>
<comment type="interaction">
    <interactant intactId="EBI-1246131">
        <id>O95167</id>
    </interactant>
    <interactant intactId="EBI-3922699">
        <id>Q96IK0</id>
        <label>TMEM101</label>
    </interactant>
    <organismsDiffer>false</organismsDiffer>
    <experiments>3</experiments>
</comment>
<comment type="interaction">
    <interactant intactId="EBI-1246131">
        <id>O95167</id>
    </interactant>
    <interactant intactId="EBI-8638294">
        <id>Q9NUH8</id>
        <label>TMEM14B</label>
    </interactant>
    <organismsDiffer>false</organismsDiffer>
    <experiments>3</experiments>
</comment>
<comment type="interaction">
    <interactant intactId="EBI-1246131">
        <id>O95167</id>
    </interactant>
    <interactant intactId="EBI-6269551">
        <id>Q6UW68</id>
        <label>TMEM205</label>
    </interactant>
    <organismsDiffer>false</organismsDiffer>
    <experiments>3</experiments>
</comment>
<comment type="interaction">
    <interactant intactId="EBI-1246131">
        <id>O95167</id>
    </interactant>
    <interactant intactId="EBI-10315004">
        <id>Q9NWH2</id>
        <label>TMEM242</label>
    </interactant>
    <organismsDiffer>false</organismsDiffer>
    <experiments>3</experiments>
</comment>
<comment type="interaction">
    <interactant intactId="EBI-1246131">
        <id>O95167</id>
    </interactant>
    <interactant intactId="EBI-6447886">
        <id>Q9Y320</id>
        <label>TMX2</label>
    </interactant>
    <organismsDiffer>false</organismsDiffer>
    <experiments>3</experiments>
</comment>
<comment type="subcellular location">
    <subcellularLocation>
        <location evidence="8">Mitochondrion inner membrane</location>
        <topology evidence="2">Single-pass membrane protein</topology>
    </subcellularLocation>
</comment>
<comment type="similarity">
    <text evidence="7">Belongs to the complex I NDUFA3 subunit family.</text>
</comment>
<proteinExistence type="evidence at protein level"/>
<reference key="1">
    <citation type="journal article" date="1998" name="Biochem. Biophys. Res. Commun.">
        <title>cDNA of eight nuclear encoded subunits of NADH:ubiquinone oxidoreductase: human complex I cDNA characterization completed.</title>
        <authorList>
            <person name="Loeffen J.L.C.M."/>
            <person name="Triepels R.H."/>
            <person name="van den Heuvel L.P."/>
            <person name="Schuelke M."/>
            <person name="Buskens C.A.F."/>
            <person name="Smeets R.J.P."/>
            <person name="Trijbels J.M.F."/>
            <person name="Smeitink J.A.M."/>
        </authorList>
    </citation>
    <scope>NUCLEOTIDE SEQUENCE [MRNA]</scope>
</reference>
<reference key="2">
    <citation type="journal article" date="2000" name="Genome Res.">
        <title>Cloning and functional analysis of cDNAs with open reading frames for 300 previously undefined genes expressed in CD34+ hematopoietic stem/progenitor cells.</title>
        <authorList>
            <person name="Zhang Q.-H."/>
            <person name="Ye M."/>
            <person name="Wu X.-Y."/>
            <person name="Ren S.-X."/>
            <person name="Zhao M."/>
            <person name="Zhao C.-J."/>
            <person name="Fu G."/>
            <person name="Shen Y."/>
            <person name="Fan H.-Y."/>
            <person name="Lu G."/>
            <person name="Zhong M."/>
            <person name="Xu X.-R."/>
            <person name="Han Z.-G."/>
            <person name="Zhang J.-W."/>
            <person name="Tao J."/>
            <person name="Huang Q.-H."/>
            <person name="Zhou J."/>
            <person name="Hu G.-X."/>
            <person name="Gu J."/>
            <person name="Chen S.-J."/>
            <person name="Chen Z."/>
        </authorList>
    </citation>
    <scope>NUCLEOTIDE SEQUENCE [LARGE SCALE MRNA]</scope>
    <source>
        <tissue>Umbilical cord blood</tissue>
    </source>
</reference>
<reference key="3">
    <citation type="journal article" date="2004" name="Genome Res.">
        <title>The status, quality, and expansion of the NIH full-length cDNA project: the Mammalian Gene Collection (MGC).</title>
        <authorList>
            <consortium name="The MGC Project Team"/>
        </authorList>
    </citation>
    <scope>NUCLEOTIDE SEQUENCE [LARGE SCALE MRNA]</scope>
    <source>
        <tissue>Pancreas</tissue>
        <tissue>Prostate</tissue>
    </source>
</reference>
<reference key="4">
    <citation type="journal article" date="2003" name="J. Biol. Chem.">
        <title>The subunit composition of the human NADH dehydrogenase obtained by rapid one-step immunopurification.</title>
        <authorList>
            <person name="Murray J."/>
            <person name="Zhang B."/>
            <person name="Taylor S.W."/>
            <person name="Oglesbee D."/>
            <person name="Fahy E."/>
            <person name="Marusich M.F."/>
            <person name="Ghosh S.S."/>
            <person name="Capaldi R.A."/>
        </authorList>
    </citation>
    <scope>IDENTIFICATION IN THE NADH-UBIQUINONE OXIDOREDUCTASE COMPLEX</scope>
    <scope>IDENTIFICATION BY MASS SPECTROMETRY</scope>
    <scope>SUBCELLULAR LOCATION</scope>
</reference>
<reference key="5">
    <citation type="journal article" date="2011" name="BMC Syst. Biol.">
        <title>Initial characterization of the human central proteome.</title>
        <authorList>
            <person name="Burkard T.R."/>
            <person name="Planyavsky M."/>
            <person name="Kaupe I."/>
            <person name="Breitwieser F.P."/>
            <person name="Buerckstuemmer T."/>
            <person name="Bennett K.L."/>
            <person name="Superti-Furga G."/>
            <person name="Colinge J."/>
        </authorList>
    </citation>
    <scope>IDENTIFICATION BY MASS SPECTROMETRY [LARGE SCALE ANALYSIS]</scope>
</reference>
<reference key="6">
    <citation type="journal article" date="2014" name="J. Proteomics">
        <title>An enzyme assisted RP-RPLC approach for in-depth analysis of human liver phosphoproteome.</title>
        <authorList>
            <person name="Bian Y."/>
            <person name="Song C."/>
            <person name="Cheng K."/>
            <person name="Dong M."/>
            <person name="Wang F."/>
            <person name="Huang J."/>
            <person name="Sun D."/>
            <person name="Wang L."/>
            <person name="Ye M."/>
            <person name="Zou H."/>
        </authorList>
    </citation>
    <scope>IDENTIFICATION BY MASS SPECTROMETRY [LARGE SCALE ANALYSIS]</scope>
    <source>
        <tissue>Liver</tissue>
    </source>
</reference>
<reference key="7">
    <citation type="journal article" date="2015" name="Proteomics">
        <title>N-terminome analysis of the human mitochondrial proteome.</title>
        <authorList>
            <person name="Vaca Jacome A.S."/>
            <person name="Rabilloud T."/>
            <person name="Schaeffer-Reiss C."/>
            <person name="Rompais M."/>
            <person name="Ayoub D."/>
            <person name="Lane L."/>
            <person name="Bairoch A."/>
            <person name="Van Dorsselaer A."/>
            <person name="Carapito C."/>
        </authorList>
    </citation>
    <scope>IDENTIFICATION BY MASS SPECTROMETRY [LARGE SCALE ANALYSIS]</scope>
</reference>
<reference key="8">
    <citation type="journal article" date="2006" name="Science">
        <title>The consensus coding sequences of human breast and colorectal cancers.</title>
        <authorList>
            <person name="Sjoeblom T."/>
            <person name="Jones S."/>
            <person name="Wood L.D."/>
            <person name="Parsons D.W."/>
            <person name="Lin J."/>
            <person name="Barber T.D."/>
            <person name="Mandelker D."/>
            <person name="Leary R.J."/>
            <person name="Ptak J."/>
            <person name="Silliman N."/>
            <person name="Szabo S."/>
            <person name="Buckhaults P."/>
            <person name="Farrell C."/>
            <person name="Meeh P."/>
            <person name="Markowitz S.D."/>
            <person name="Willis J."/>
            <person name="Dawson D."/>
            <person name="Willson J.K.V."/>
            <person name="Gazdar A.F."/>
            <person name="Hartigan J."/>
            <person name="Wu L."/>
            <person name="Liu C."/>
            <person name="Parmigiani G."/>
            <person name="Park B.H."/>
            <person name="Bachman K.E."/>
            <person name="Papadopoulos N."/>
            <person name="Vogelstein B."/>
            <person name="Kinzler K.W."/>
            <person name="Velculescu V.E."/>
        </authorList>
    </citation>
    <scope>VARIANT [LARGE SCALE ANALYSIS] ASP-62</scope>
</reference>
<reference key="9">
    <citation type="journal article" date="2016" name="Nature">
        <title>Accessory subunits are integral for assembly and function of human mitochondrial complex I.</title>
        <authorList>
            <person name="Stroud D.A."/>
            <person name="Surgenor E.E."/>
            <person name="Formosa L.E."/>
            <person name="Reljic B."/>
            <person name="Frazier A.E."/>
            <person name="Dibley M.G."/>
            <person name="Osellame L.D."/>
            <person name="Stait T."/>
            <person name="Beilharz T.H."/>
            <person name="Thorburn D.R."/>
            <person name="Salim A."/>
            <person name="Ryan M.T."/>
        </authorList>
    </citation>
    <scope>FUNCTION</scope>
    <scope>IDENTIFICATION IN THE NADH-UBIQUINONE OXIDOREDUCTASE COMPLEX</scope>
</reference>
<evidence type="ECO:0000250" key="1">
    <source>
        <dbReference type="UniProtKB" id="Q02371"/>
    </source>
</evidence>
<evidence type="ECO:0000255" key="2"/>
<evidence type="ECO:0000256" key="3">
    <source>
        <dbReference type="SAM" id="MobiDB-lite"/>
    </source>
</evidence>
<evidence type="ECO:0000269" key="4">
    <source>
    </source>
</evidence>
<evidence type="ECO:0000269" key="5">
    <source>
    </source>
</evidence>
<evidence type="ECO:0000269" key="6">
    <source>
    </source>
</evidence>
<evidence type="ECO:0000305" key="7"/>
<evidence type="ECO:0000305" key="8">
    <source>
    </source>
</evidence>
<keyword id="KW-0002">3D-structure</keyword>
<keyword id="KW-0007">Acetylation</keyword>
<keyword id="KW-0249">Electron transport</keyword>
<keyword id="KW-0472">Membrane</keyword>
<keyword id="KW-0496">Mitochondrion</keyword>
<keyword id="KW-0999">Mitochondrion inner membrane</keyword>
<keyword id="KW-1267">Proteomics identification</keyword>
<keyword id="KW-1185">Reference proteome</keyword>
<keyword id="KW-0679">Respiratory chain</keyword>
<keyword id="KW-0812">Transmembrane</keyword>
<keyword id="KW-1133">Transmembrane helix</keyword>
<keyword id="KW-0813">Transport</keyword>
<dbReference type="EMBL" id="AF044955">
    <property type="protein sequence ID" value="AAD05420.1"/>
    <property type="molecule type" value="mRNA"/>
</dbReference>
<dbReference type="EMBL" id="AF070653">
    <property type="protein sequence ID" value="AAD20959.1"/>
    <property type="molecule type" value="mRNA"/>
</dbReference>
<dbReference type="EMBL" id="BC022369">
    <property type="protein sequence ID" value="AAH22369.1"/>
    <property type="molecule type" value="mRNA"/>
</dbReference>
<dbReference type="EMBL" id="BC061644">
    <property type="protein sequence ID" value="AAH61644.1"/>
    <property type="molecule type" value="mRNA"/>
</dbReference>
<dbReference type="CCDS" id="CCDS12877.1"/>
<dbReference type="PIR" id="JE0379">
    <property type="entry name" value="JE0379"/>
</dbReference>
<dbReference type="RefSeq" id="NP_004533.1">
    <property type="nucleotide sequence ID" value="NM_004542.4"/>
</dbReference>
<dbReference type="RefSeq" id="XP_016882322.1">
    <property type="nucleotide sequence ID" value="XM_017026833.1"/>
</dbReference>
<dbReference type="RefSeq" id="XP_054177044.1">
    <property type="nucleotide sequence ID" value="XM_054321069.1"/>
</dbReference>
<dbReference type="RefSeq" id="XP_054185658.1">
    <property type="nucleotide sequence ID" value="XM_054329683.1"/>
</dbReference>
<dbReference type="RefSeq" id="XP_054186153.1">
    <property type="nucleotide sequence ID" value="XM_054330178.1"/>
</dbReference>
<dbReference type="RefSeq" id="XP_054186450.1">
    <property type="nucleotide sequence ID" value="XM_054330475.1"/>
</dbReference>
<dbReference type="RefSeq" id="XP_054186933.1">
    <property type="nucleotide sequence ID" value="XM_054330958.1"/>
</dbReference>
<dbReference type="RefSeq" id="XP_054187214.1">
    <property type="nucleotide sequence ID" value="XM_054331239.1"/>
</dbReference>
<dbReference type="RefSeq" id="XP_054187489.1">
    <property type="nucleotide sequence ID" value="XM_054331514.1"/>
</dbReference>
<dbReference type="RefSeq" id="XP_054189529.1">
    <property type="nucleotide sequence ID" value="XM_054333554.1"/>
</dbReference>
<dbReference type="RefSeq" id="XP_054189630.1">
    <property type="nucleotide sequence ID" value="XM_054333655.1"/>
</dbReference>
<dbReference type="PDB" id="5XTC">
    <property type="method" value="EM"/>
    <property type="resolution" value="3.70 A"/>
    <property type="chains" value="U=2-84"/>
</dbReference>
<dbReference type="PDB" id="5XTD">
    <property type="method" value="EM"/>
    <property type="resolution" value="3.70 A"/>
    <property type="chains" value="U=2-84"/>
</dbReference>
<dbReference type="PDB" id="5XTH">
    <property type="method" value="EM"/>
    <property type="resolution" value="3.90 A"/>
    <property type="chains" value="U=2-84"/>
</dbReference>
<dbReference type="PDB" id="5XTI">
    <property type="method" value="EM"/>
    <property type="resolution" value="17.40 A"/>
    <property type="chains" value="BU/U=2-84"/>
</dbReference>
<dbReference type="PDBsum" id="5XTC"/>
<dbReference type="PDBsum" id="5XTD"/>
<dbReference type="PDBsum" id="5XTH"/>
<dbReference type="PDBsum" id="5XTI"/>
<dbReference type="SMR" id="O95167"/>
<dbReference type="BioGRID" id="110776">
    <property type="interactions" value="91"/>
</dbReference>
<dbReference type="ComplexPortal" id="CPX-577">
    <property type="entry name" value="Mitochondrial respiratory chain complex I"/>
</dbReference>
<dbReference type="CORUM" id="O95167"/>
<dbReference type="FunCoup" id="O95167">
    <property type="interactions" value="725"/>
</dbReference>
<dbReference type="IntAct" id="O95167">
    <property type="interactions" value="73"/>
</dbReference>
<dbReference type="MINT" id="O95167"/>
<dbReference type="STRING" id="9606.ENSP00000418438"/>
<dbReference type="BindingDB" id="O95167"/>
<dbReference type="ChEMBL" id="CHEMBL2363065"/>
<dbReference type="DrugBank" id="DB00157">
    <property type="generic name" value="NADH"/>
</dbReference>
<dbReference type="DrugCentral" id="O95167"/>
<dbReference type="iPTMnet" id="O95167"/>
<dbReference type="PhosphoSitePlus" id="O95167"/>
<dbReference type="SwissPalm" id="O95167"/>
<dbReference type="BioMuta" id="NDUFA3"/>
<dbReference type="jPOST" id="O95167"/>
<dbReference type="MassIVE" id="O95167"/>
<dbReference type="PaxDb" id="9606-ENSP00000418438"/>
<dbReference type="PeptideAtlas" id="O95167"/>
<dbReference type="ProteomicsDB" id="50680"/>
<dbReference type="Pumba" id="O95167"/>
<dbReference type="TopDownProteomics" id="O95167"/>
<dbReference type="Antibodypedia" id="32779">
    <property type="antibodies" value="130 antibodies from 22 providers"/>
</dbReference>
<dbReference type="DNASU" id="4696"/>
<dbReference type="Ensembl" id="ENST00000419113.5">
    <property type="protein sequence ID" value="ENSP00000398290.1"/>
    <property type="gene ID" value="ENSG00000170906.16"/>
</dbReference>
<dbReference type="Ensembl" id="ENST00000485876.6">
    <property type="protein sequence ID" value="ENSP00000418438.1"/>
    <property type="gene ID" value="ENSG00000170906.16"/>
</dbReference>
<dbReference type="Ensembl" id="ENST00000610406.1">
    <property type="protein sequence ID" value="ENSP00000478119.1"/>
    <property type="gene ID" value="ENSG00000275724.1"/>
</dbReference>
<dbReference type="Ensembl" id="ENST00000612327.1">
    <property type="protein sequence ID" value="ENSP00000480437.1"/>
    <property type="gene ID" value="ENSG00000276220.1"/>
</dbReference>
<dbReference type="Ensembl" id="ENST00000613276.1">
    <property type="protein sequence ID" value="ENSP00000477919.1"/>
    <property type="gene ID" value="ENSG00000273642.1"/>
</dbReference>
<dbReference type="Ensembl" id="ENST00000617282.1">
    <property type="protein sequence ID" value="ENSP00000482015.1"/>
    <property type="gene ID" value="ENSG00000278365.1"/>
</dbReference>
<dbReference type="Ensembl" id="ENST00000618338.1">
    <property type="protein sequence ID" value="ENSP00000481545.1"/>
    <property type="gene ID" value="ENSG00000274359.1"/>
</dbReference>
<dbReference type="Ensembl" id="ENST00000619253.1">
    <property type="protein sequence ID" value="ENSP00000483934.1"/>
    <property type="gene ID" value="ENSG00000275605.1"/>
</dbReference>
<dbReference type="Ensembl" id="ENST00000619966.1">
    <property type="protein sequence ID" value="ENSP00000484436.1"/>
    <property type="gene ID" value="ENSG00000276766.1"/>
</dbReference>
<dbReference type="Ensembl" id="ENST00000620289.4">
    <property type="protein sequence ID" value="ENSP00000477783.1"/>
    <property type="gene ID" value="ENSG00000276061.4"/>
</dbReference>
<dbReference type="Ensembl" id="ENST00000621307.1">
    <property type="protein sequence ID" value="ENSP00000483002.1"/>
    <property type="gene ID" value="ENSG00000277722.1"/>
</dbReference>
<dbReference type="Ensembl" id="ENST00000622523.4">
    <property type="protein sequence ID" value="ENSP00000483683.1"/>
    <property type="gene ID" value="ENSG00000276061.4"/>
</dbReference>
<dbReference type="GeneID" id="4696"/>
<dbReference type="KEGG" id="hsa:4696"/>
<dbReference type="MANE-Select" id="ENST00000485876.6">
    <property type="protein sequence ID" value="ENSP00000418438.1"/>
    <property type="RefSeq nucleotide sequence ID" value="NM_004542.4"/>
    <property type="RefSeq protein sequence ID" value="NP_004533.1"/>
</dbReference>
<dbReference type="AGR" id="HGNC:7686"/>
<dbReference type="CTD" id="4696"/>
<dbReference type="DisGeNET" id="4696"/>
<dbReference type="GeneCards" id="NDUFA3"/>
<dbReference type="HGNC" id="HGNC:7686">
    <property type="gene designation" value="NDUFA3"/>
</dbReference>
<dbReference type="HPA" id="ENSG00000170906">
    <property type="expression patterns" value="Tissue enhanced (heart)"/>
</dbReference>
<dbReference type="MalaCards" id="NDUFA3"/>
<dbReference type="MIM" id="603832">
    <property type="type" value="gene"/>
</dbReference>
<dbReference type="neXtProt" id="NX_O95167"/>
<dbReference type="OpenTargets" id="ENSG00000170906"/>
<dbReference type="PharmGKB" id="PA31492"/>
<dbReference type="VEuPathDB" id="HostDB:ENSG00000170906"/>
<dbReference type="eggNOG" id="ENOG502S4RS">
    <property type="taxonomic scope" value="Eukaryota"/>
</dbReference>
<dbReference type="GeneTree" id="ENSGT00390000004322"/>
<dbReference type="HOGENOM" id="CLU_171491_0_0_1"/>
<dbReference type="InParanoid" id="O95167"/>
<dbReference type="OMA" id="MINQAVP"/>
<dbReference type="OrthoDB" id="199366at2759"/>
<dbReference type="PAN-GO" id="O95167">
    <property type="GO annotations" value="1 GO annotation based on evolutionary models"/>
</dbReference>
<dbReference type="PhylomeDB" id="O95167"/>
<dbReference type="TreeFam" id="TF333021"/>
<dbReference type="BioCyc" id="MetaCyc:HS10204-MONOMER"/>
<dbReference type="PathwayCommons" id="O95167"/>
<dbReference type="Reactome" id="R-HSA-611105">
    <property type="pathway name" value="Respiratory electron transport"/>
</dbReference>
<dbReference type="Reactome" id="R-HSA-6799198">
    <property type="pathway name" value="Complex I biogenesis"/>
</dbReference>
<dbReference type="SignaLink" id="O95167"/>
<dbReference type="SIGNOR" id="O95167"/>
<dbReference type="BioGRID-ORCS" id="4696">
    <property type="hits" value="114 hits in 1153 CRISPR screens"/>
</dbReference>
<dbReference type="ChiTaRS" id="NDUFA3">
    <property type="organism name" value="human"/>
</dbReference>
<dbReference type="GenomeRNAi" id="4696"/>
<dbReference type="Pharos" id="O95167">
    <property type="development level" value="Tclin"/>
</dbReference>
<dbReference type="PRO" id="PR:O95167"/>
<dbReference type="Proteomes" id="UP000005640">
    <property type="component" value="Chromosome 19"/>
</dbReference>
<dbReference type="RNAct" id="O95167">
    <property type="molecule type" value="protein"/>
</dbReference>
<dbReference type="Bgee" id="ENSG00000170906">
    <property type="expression patterns" value="Expressed in primary visual cortex and 96 other cell types or tissues"/>
</dbReference>
<dbReference type="ExpressionAtlas" id="O95167">
    <property type="expression patterns" value="baseline and differential"/>
</dbReference>
<dbReference type="GO" id="GO:0005743">
    <property type="term" value="C:mitochondrial inner membrane"/>
    <property type="evidence" value="ECO:0000314"/>
    <property type="project" value="ComplexPortal"/>
</dbReference>
<dbReference type="GO" id="GO:0005739">
    <property type="term" value="C:mitochondrion"/>
    <property type="evidence" value="ECO:0007005"/>
    <property type="project" value="UniProtKB"/>
</dbReference>
<dbReference type="GO" id="GO:0045271">
    <property type="term" value="C:respiratory chain complex I"/>
    <property type="evidence" value="ECO:0000314"/>
    <property type="project" value="UniProtKB"/>
</dbReference>
<dbReference type="GO" id="GO:0008137">
    <property type="term" value="F:NADH dehydrogenase (ubiquinone) activity"/>
    <property type="evidence" value="ECO:0000303"/>
    <property type="project" value="UniProtKB"/>
</dbReference>
<dbReference type="GO" id="GO:0009060">
    <property type="term" value="P:aerobic respiration"/>
    <property type="evidence" value="ECO:0000303"/>
    <property type="project" value="ComplexPortal"/>
</dbReference>
<dbReference type="GO" id="GO:0006120">
    <property type="term" value="P:mitochondrial electron transport, NADH to ubiquinone"/>
    <property type="evidence" value="ECO:0000303"/>
    <property type="project" value="UniProtKB"/>
</dbReference>
<dbReference type="GO" id="GO:0042776">
    <property type="term" value="P:proton motive force-driven mitochondrial ATP synthesis"/>
    <property type="evidence" value="ECO:0000303"/>
    <property type="project" value="ComplexPortal"/>
</dbReference>
<dbReference type="CDD" id="cd22902">
    <property type="entry name" value="NDUFA3"/>
    <property type="match status" value="1"/>
</dbReference>
<dbReference type="InterPro" id="IPR026626">
    <property type="entry name" value="NDUFA3"/>
</dbReference>
<dbReference type="PANTHER" id="PTHR15221">
    <property type="entry name" value="NADH DEHYDROGENASE [UBIQUINONE] 1 ALPHA SUBCOMPLEX SUBUNIT 3"/>
    <property type="match status" value="1"/>
</dbReference>
<dbReference type="PANTHER" id="PTHR15221:SF0">
    <property type="entry name" value="NADH DEHYDROGENASE [UBIQUINONE] 1 ALPHA SUBCOMPLEX SUBUNIT 3"/>
    <property type="match status" value="1"/>
</dbReference>
<dbReference type="Pfam" id="PF14987">
    <property type="entry name" value="NADHdh_A3"/>
    <property type="match status" value="1"/>
</dbReference>
<sequence>MAARVGAFLKNAWDKEPVLVVSFVVGGLAVILPPLSPYFKYSVMINKATPYNYPVPVRDDGNMPDVPSHPQDPQGPSLEWLKKL</sequence>
<protein>
    <recommendedName>
        <fullName>NADH dehydrogenase [ubiquinone] 1 alpha subcomplex subunit 3</fullName>
    </recommendedName>
    <alternativeName>
        <fullName>Complex I-B9</fullName>
        <shortName>CI-B9</shortName>
    </alternativeName>
    <alternativeName>
        <fullName>NADH-ubiquinone oxidoreductase B9 subunit</fullName>
    </alternativeName>
</protein>
<feature type="initiator methionine" description="Removed" evidence="1">
    <location>
        <position position="1"/>
    </location>
</feature>
<feature type="chain" id="PRO_0000118793" description="NADH dehydrogenase [ubiquinone] 1 alpha subcomplex subunit 3">
    <location>
        <begin position="2"/>
        <end position="84"/>
    </location>
</feature>
<feature type="transmembrane region" description="Helical" evidence="2">
    <location>
        <begin position="19"/>
        <end position="39"/>
    </location>
</feature>
<feature type="region of interest" description="Disordered" evidence="3">
    <location>
        <begin position="56"/>
        <end position="84"/>
    </location>
</feature>
<feature type="modified residue" description="N-acetylalanine" evidence="1">
    <location>
        <position position="2"/>
    </location>
</feature>
<feature type="sequence variant" id="VAR_036175" description="In a breast cancer sample; somatic mutation." evidence="5">
    <original>N</original>
    <variation>D</variation>
    <location>
        <position position="62"/>
    </location>
</feature>
<organism>
    <name type="scientific">Homo sapiens</name>
    <name type="common">Human</name>
    <dbReference type="NCBI Taxonomy" id="9606"/>
    <lineage>
        <taxon>Eukaryota</taxon>
        <taxon>Metazoa</taxon>
        <taxon>Chordata</taxon>
        <taxon>Craniata</taxon>
        <taxon>Vertebrata</taxon>
        <taxon>Euteleostomi</taxon>
        <taxon>Mammalia</taxon>
        <taxon>Eutheria</taxon>
        <taxon>Euarchontoglires</taxon>
        <taxon>Primates</taxon>
        <taxon>Haplorrhini</taxon>
        <taxon>Catarrhini</taxon>
        <taxon>Hominidae</taxon>
        <taxon>Homo</taxon>
    </lineage>
</organism>